<dbReference type="EMBL" id="AM421808">
    <property type="protein sequence ID" value="CAM10883.1"/>
    <property type="status" value="ALT_INIT"/>
    <property type="molecule type" value="Genomic_DNA"/>
</dbReference>
<dbReference type="RefSeq" id="WP_002239525.1">
    <property type="nucleotide sequence ID" value="NC_008767.1"/>
</dbReference>
<dbReference type="SMR" id="A1KVH9"/>
<dbReference type="KEGG" id="nmc:NMC1704"/>
<dbReference type="HOGENOM" id="CLU_066645_0_1_4"/>
<dbReference type="Proteomes" id="UP000002286">
    <property type="component" value="Chromosome"/>
</dbReference>
<dbReference type="GO" id="GO:0043590">
    <property type="term" value="C:bacterial nucleoid"/>
    <property type="evidence" value="ECO:0007669"/>
    <property type="project" value="TreeGrafter"/>
</dbReference>
<dbReference type="GO" id="GO:0006310">
    <property type="term" value="P:DNA recombination"/>
    <property type="evidence" value="ECO:0007669"/>
    <property type="project" value="UniProtKB-UniRule"/>
</dbReference>
<dbReference type="GO" id="GO:0006302">
    <property type="term" value="P:double-strand break repair"/>
    <property type="evidence" value="ECO:0007669"/>
    <property type="project" value="TreeGrafter"/>
</dbReference>
<dbReference type="Gene3D" id="2.40.50.140">
    <property type="entry name" value="Nucleic acid-binding proteins"/>
    <property type="match status" value="1"/>
</dbReference>
<dbReference type="Gene3D" id="1.20.1440.120">
    <property type="entry name" value="Recombination protein O, C-terminal domain"/>
    <property type="match status" value="1"/>
</dbReference>
<dbReference type="HAMAP" id="MF_00201">
    <property type="entry name" value="RecO"/>
    <property type="match status" value="1"/>
</dbReference>
<dbReference type="InterPro" id="IPR037278">
    <property type="entry name" value="ARFGAP/RecO"/>
</dbReference>
<dbReference type="InterPro" id="IPR022572">
    <property type="entry name" value="DNA_rep/recomb_RecO_N"/>
</dbReference>
<dbReference type="InterPro" id="IPR012340">
    <property type="entry name" value="NA-bd_OB-fold"/>
</dbReference>
<dbReference type="InterPro" id="IPR003717">
    <property type="entry name" value="RecO"/>
</dbReference>
<dbReference type="InterPro" id="IPR042242">
    <property type="entry name" value="RecO_C"/>
</dbReference>
<dbReference type="NCBIfam" id="TIGR00613">
    <property type="entry name" value="reco"/>
    <property type="match status" value="1"/>
</dbReference>
<dbReference type="PANTHER" id="PTHR33991">
    <property type="entry name" value="DNA REPAIR PROTEIN RECO"/>
    <property type="match status" value="1"/>
</dbReference>
<dbReference type="PANTHER" id="PTHR33991:SF1">
    <property type="entry name" value="DNA REPAIR PROTEIN RECO"/>
    <property type="match status" value="1"/>
</dbReference>
<dbReference type="Pfam" id="PF02565">
    <property type="entry name" value="RecO_C"/>
    <property type="match status" value="1"/>
</dbReference>
<dbReference type="Pfam" id="PF11967">
    <property type="entry name" value="RecO_N"/>
    <property type="match status" value="1"/>
</dbReference>
<dbReference type="SUPFAM" id="SSF57863">
    <property type="entry name" value="ArfGap/RecO-like zinc finger"/>
    <property type="match status" value="1"/>
</dbReference>
<dbReference type="SUPFAM" id="SSF50249">
    <property type="entry name" value="Nucleic acid-binding proteins"/>
    <property type="match status" value="1"/>
</dbReference>
<protein>
    <recommendedName>
        <fullName evidence="1">DNA repair protein RecO</fullName>
    </recommendedName>
    <alternativeName>
        <fullName evidence="1">Recombination protein O</fullName>
    </alternativeName>
</protein>
<keyword id="KW-0227">DNA damage</keyword>
<keyword id="KW-0233">DNA recombination</keyword>
<keyword id="KW-0234">DNA repair</keyword>
<accession>A1KVH9</accession>
<evidence type="ECO:0000255" key="1">
    <source>
        <dbReference type="HAMAP-Rule" id="MF_00201"/>
    </source>
</evidence>
<evidence type="ECO:0000256" key="2">
    <source>
        <dbReference type="SAM" id="MobiDB-lite"/>
    </source>
</evidence>
<evidence type="ECO:0000305" key="3"/>
<sequence length="263" mass="29595">MSEHRVNHEPVFLLASSPWRESSLRVEAFSRRYGRVALLARSARKRQSELRGVLVPFVPVSASWYGSQELKTLHRAEWIGGWPQPQGRALFSGLYVNELMLKLTVREDPLPELYDALAEVMEAVCCKAAYIDDLRRFEWRLLNLLGVAPDLHADGTGGDILADKTYRLMPEEAVMPVCEDADALSHEAGAIVEGQSLIDLREGSFRTAESLQQALKITRLFIRHLLPEGLKSRQVLEQIRQFDRKETARETVPTSDGTASNAV</sequence>
<gene>
    <name evidence="1" type="primary">recO</name>
    <name type="ordered locus">NMC1704</name>
</gene>
<proteinExistence type="inferred from homology"/>
<feature type="chain" id="PRO_0000325204" description="DNA repair protein RecO">
    <location>
        <begin position="1"/>
        <end position="263"/>
    </location>
</feature>
<feature type="region of interest" description="Disordered" evidence="2">
    <location>
        <begin position="243"/>
        <end position="263"/>
    </location>
</feature>
<feature type="compositionally biased region" description="Polar residues" evidence="2">
    <location>
        <begin position="252"/>
        <end position="263"/>
    </location>
</feature>
<reference key="1">
    <citation type="journal article" date="2007" name="PLoS Genet.">
        <title>Meningococcal genetic variation mechanisms viewed through comparative analysis of serogroup C strain FAM18.</title>
        <authorList>
            <person name="Bentley S.D."/>
            <person name="Vernikos G.S."/>
            <person name="Snyder L.A.S."/>
            <person name="Churcher C."/>
            <person name="Arrowsmith C."/>
            <person name="Chillingworth T."/>
            <person name="Cronin A."/>
            <person name="Davis P.H."/>
            <person name="Holroyd N.E."/>
            <person name="Jagels K."/>
            <person name="Maddison M."/>
            <person name="Moule S."/>
            <person name="Rabbinowitsch E."/>
            <person name="Sharp S."/>
            <person name="Unwin L."/>
            <person name="Whitehead S."/>
            <person name="Quail M.A."/>
            <person name="Achtman M."/>
            <person name="Barrell B.G."/>
            <person name="Saunders N.J."/>
            <person name="Parkhill J."/>
        </authorList>
    </citation>
    <scope>NUCLEOTIDE SEQUENCE [LARGE SCALE GENOMIC DNA]</scope>
    <source>
        <strain>ATCC 700532 / DSM 15464 / FAM18</strain>
    </source>
</reference>
<name>RECO_NEIMF</name>
<comment type="function">
    <text evidence="1">Involved in DNA repair and RecF pathway recombination.</text>
</comment>
<comment type="similarity">
    <text evidence="1">Belongs to the RecO family.</text>
</comment>
<comment type="sequence caution" evidence="3">
    <conflict type="erroneous initiation">
        <sequence resource="EMBL-CDS" id="CAM10883"/>
    </conflict>
</comment>
<organism>
    <name type="scientific">Neisseria meningitidis serogroup C / serotype 2a (strain ATCC 700532 / DSM 15464 / FAM18)</name>
    <dbReference type="NCBI Taxonomy" id="272831"/>
    <lineage>
        <taxon>Bacteria</taxon>
        <taxon>Pseudomonadati</taxon>
        <taxon>Pseudomonadota</taxon>
        <taxon>Betaproteobacteria</taxon>
        <taxon>Neisseriales</taxon>
        <taxon>Neisseriaceae</taxon>
        <taxon>Neisseria</taxon>
    </lineage>
</organism>